<protein>
    <recommendedName>
        <fullName evidence="1">Cobyrinate a,c-diamide synthase</fullName>
        <ecNumber evidence="1">6.3.5.11</ecNumber>
    </recommendedName>
    <alternativeName>
        <fullName evidence="1">Cobyrinic acid a,c-diamide synthetase</fullName>
    </alternativeName>
    <alternativeName>
        <fullName evidence="1">Ni-sirohydrochlorin a,c-diamide synthase</fullName>
        <ecNumber evidence="1">6.3.5.12</ecNumber>
    </alternativeName>
    <alternativeName>
        <fullName evidence="1">Ni-sirohydrochlorin a,c-diamide synthetase</fullName>
    </alternativeName>
</protein>
<evidence type="ECO:0000255" key="1">
    <source>
        <dbReference type="HAMAP-Rule" id="MF_00027"/>
    </source>
</evidence>
<sequence length="443" mass="50206">MIMKRVVIAGTSSEVGKTVISTGIMKALSKKYNVQGYKVGPDYIDPTYHTIATGNKSRNLDSFFMNKEQIKYLFQKHSKDKDISVIEGVRGLYEGISAIDDIGSTASVAKALDSPIILLVNAKSLTRSAIAIIKGFMSFDNVKIKGVIFNFVRSENHIKKLKDAMSYYLPDIEIIGFIPRNEDFKVEGRHLGLVPTPENLKEIESKIVLWGELVEKYLDLDKIVEIADEDFEEVDDVFLWEVNENYKKIAVAYDKAFNFYYWDNFEALKENKAKIEFFSPLKDSEVPDADILYIGGGYPELFKEELSRNKEMIESIKEFDGYIYGECGGLMYITKSIDNVPMVGLLNCSAVMTKHVQGLSYVKAEFLEDCLIGRKGLKFKGHEFHYSKLVNIKEERFAYKIERGRGIINNLDGIFNGKVLAGYLHNHAVANPYFASSMVNFGE</sequence>
<gene>
    <name evidence="1" type="primary">cbiA</name>
    <name evidence="1" type="synonym">cfbB</name>
    <name type="ordered locus">MJ1421</name>
</gene>
<proteinExistence type="inferred from homology"/>
<keyword id="KW-0067">ATP-binding</keyword>
<keyword id="KW-0169">Cobalamin biosynthesis</keyword>
<keyword id="KW-0315">Glutamine amidotransferase</keyword>
<keyword id="KW-0436">Ligase</keyword>
<keyword id="KW-0460">Magnesium</keyword>
<keyword id="KW-0484">Methanogenesis</keyword>
<keyword id="KW-0547">Nucleotide-binding</keyword>
<keyword id="KW-1185">Reference proteome</keyword>
<comment type="function">
    <text evidence="1">Catalyzes the ATP-dependent amidation of the two carboxylate groups at positions a and c of cobyrinate, using either L-glutamine or ammonia as the nitrogen source. Involved in the biosynthesis of the unique nickel-containing tetrapyrrole coenzyme F430, the prosthetic group of methyl-coenzyme M reductase (MCR), which plays a key role in methanogenesis and anaerobic methane oxidation. Catalyzes the ATP-dependent amidation of the two carboxylate groups at positions a and c of Ni-sirohydrochlorin, using L-glutamine or ammonia as the nitrogen source.</text>
</comment>
<comment type="catalytic activity">
    <reaction evidence="1">
        <text>cob(II)yrinate + 2 L-glutamine + 2 ATP + 2 H2O = cob(II)yrinate a,c diamide + 2 L-glutamate + 2 ADP + 2 phosphate + 2 H(+)</text>
        <dbReference type="Rhea" id="RHEA:26289"/>
        <dbReference type="ChEBI" id="CHEBI:15377"/>
        <dbReference type="ChEBI" id="CHEBI:15378"/>
        <dbReference type="ChEBI" id="CHEBI:29985"/>
        <dbReference type="ChEBI" id="CHEBI:30616"/>
        <dbReference type="ChEBI" id="CHEBI:43474"/>
        <dbReference type="ChEBI" id="CHEBI:58359"/>
        <dbReference type="ChEBI" id="CHEBI:58537"/>
        <dbReference type="ChEBI" id="CHEBI:58894"/>
        <dbReference type="ChEBI" id="CHEBI:456216"/>
        <dbReference type="EC" id="6.3.5.11"/>
    </reaction>
</comment>
<comment type="catalytic activity">
    <reaction evidence="1">
        <text>Ni-sirohydrochlorin + 2 L-glutamine + 2 ATP + 2 H2O = Ni-sirohydrochlorin a,c-diamide + 2 L-glutamate + 2 ADP + 2 phosphate + 2 H(+)</text>
        <dbReference type="Rhea" id="RHEA:52896"/>
        <dbReference type="ChEBI" id="CHEBI:15377"/>
        <dbReference type="ChEBI" id="CHEBI:15378"/>
        <dbReference type="ChEBI" id="CHEBI:29985"/>
        <dbReference type="ChEBI" id="CHEBI:30616"/>
        <dbReference type="ChEBI" id="CHEBI:43474"/>
        <dbReference type="ChEBI" id="CHEBI:58359"/>
        <dbReference type="ChEBI" id="CHEBI:136841"/>
        <dbReference type="ChEBI" id="CHEBI:136887"/>
        <dbReference type="ChEBI" id="CHEBI:456216"/>
        <dbReference type="EC" id="6.3.5.12"/>
    </reaction>
</comment>
<comment type="cofactor">
    <cofactor evidence="1">
        <name>Mg(2+)</name>
        <dbReference type="ChEBI" id="CHEBI:18420"/>
    </cofactor>
</comment>
<comment type="pathway">
    <text evidence="1">Cofactor biosynthesis; adenosylcobalamin biosynthesis; cob(II)yrinate a,c-diamide from sirohydrochlorin (anaerobic route): step 10/10.</text>
</comment>
<comment type="domain">
    <text evidence="1">Comprises of two domains. The C-terminal domain contains the binding site for glutamine and catalyzes the hydrolysis of this substrate to glutamate and ammonia. The N-terminal domain is anticipated to bind ATP, and cobyrinate or Ni-sirohydrochlorin, and catalyzes the ultimate synthesis of the diamide product. The ammonia produced via the glutaminase domain is probably translocated to the adjacent domain via a molecular tunnel, where it reacts with an activated intermediate.</text>
</comment>
<comment type="miscellaneous">
    <text evidence="1">The a and c carboxylates of cobyrinate and Ni-sirohydrochlorin are activated for nucleophilic attack via formation of a phosphorylated intermediate by ATP. CbiA catalyzes first the amidation of the c-carboxylate, and then that of the a-carboxylate.</text>
</comment>
<comment type="similarity">
    <text evidence="1">Belongs to the CobB/CbiA family.</text>
</comment>
<organism>
    <name type="scientific">Methanocaldococcus jannaschii (strain ATCC 43067 / DSM 2661 / JAL-1 / JCM 10045 / NBRC 100440)</name>
    <name type="common">Methanococcus jannaschii</name>
    <dbReference type="NCBI Taxonomy" id="243232"/>
    <lineage>
        <taxon>Archaea</taxon>
        <taxon>Methanobacteriati</taxon>
        <taxon>Methanobacteriota</taxon>
        <taxon>Methanomada group</taxon>
        <taxon>Methanococci</taxon>
        <taxon>Methanococcales</taxon>
        <taxon>Methanocaldococcaceae</taxon>
        <taxon>Methanocaldococcus</taxon>
    </lineage>
</organism>
<feature type="chain" id="PRO_0000141276" description="Cobyrinate a,c-diamide synthase">
    <location>
        <begin position="1"/>
        <end position="443"/>
    </location>
</feature>
<feature type="domain" description="GATase cobBQ-type" evidence="1">
    <location>
        <begin position="248"/>
        <end position="433"/>
    </location>
</feature>
<feature type="active site" description="Nucleophile" evidence="1">
    <location>
        <position position="327"/>
    </location>
</feature>
<feature type="site" description="Increases nucleophilicity of active site Cys" evidence="1">
    <location>
        <position position="425"/>
    </location>
</feature>
<name>CBIA_METJA</name>
<reference key="1">
    <citation type="journal article" date="1996" name="Science">
        <title>Complete genome sequence of the methanogenic archaeon, Methanococcus jannaschii.</title>
        <authorList>
            <person name="Bult C.J."/>
            <person name="White O."/>
            <person name="Olsen G.J."/>
            <person name="Zhou L."/>
            <person name="Fleischmann R.D."/>
            <person name="Sutton G.G."/>
            <person name="Blake J.A."/>
            <person name="FitzGerald L.M."/>
            <person name="Clayton R.A."/>
            <person name="Gocayne J.D."/>
            <person name="Kerlavage A.R."/>
            <person name="Dougherty B.A."/>
            <person name="Tomb J.-F."/>
            <person name="Adams M.D."/>
            <person name="Reich C.I."/>
            <person name="Overbeek R."/>
            <person name="Kirkness E.F."/>
            <person name="Weinstock K.G."/>
            <person name="Merrick J.M."/>
            <person name="Glodek A."/>
            <person name="Scott J.L."/>
            <person name="Geoghagen N.S.M."/>
            <person name="Weidman J.F."/>
            <person name="Fuhrmann J.L."/>
            <person name="Nguyen D."/>
            <person name="Utterback T.R."/>
            <person name="Kelley J.M."/>
            <person name="Peterson J.D."/>
            <person name="Sadow P.W."/>
            <person name="Hanna M.C."/>
            <person name="Cotton M.D."/>
            <person name="Roberts K.M."/>
            <person name="Hurst M.A."/>
            <person name="Kaine B.P."/>
            <person name="Borodovsky M."/>
            <person name="Klenk H.-P."/>
            <person name="Fraser C.M."/>
            <person name="Smith H.O."/>
            <person name="Woese C.R."/>
            <person name="Venter J.C."/>
        </authorList>
    </citation>
    <scope>NUCLEOTIDE SEQUENCE [LARGE SCALE GENOMIC DNA]</scope>
    <source>
        <strain>ATCC 43067 / DSM 2661 / JAL-1 / JCM 10045 / NBRC 100440</strain>
    </source>
</reference>
<accession>Q58816</accession>
<dbReference type="EC" id="6.3.5.11" evidence="1"/>
<dbReference type="EC" id="6.3.5.12" evidence="1"/>
<dbReference type="EMBL" id="L77117">
    <property type="protein sequence ID" value="AAB99432.1"/>
    <property type="molecule type" value="Genomic_DNA"/>
</dbReference>
<dbReference type="PIR" id="D64477">
    <property type="entry name" value="D64477"/>
</dbReference>
<dbReference type="SMR" id="Q58816"/>
<dbReference type="FunCoup" id="Q58816">
    <property type="interactions" value="110"/>
</dbReference>
<dbReference type="STRING" id="243232.MJ_1421"/>
<dbReference type="PaxDb" id="243232-MJ_1421"/>
<dbReference type="EnsemblBacteria" id="AAB99432">
    <property type="protein sequence ID" value="AAB99432"/>
    <property type="gene ID" value="MJ_1421"/>
</dbReference>
<dbReference type="KEGG" id="mja:MJ_1421"/>
<dbReference type="eggNOG" id="arCOG00106">
    <property type="taxonomic scope" value="Archaea"/>
</dbReference>
<dbReference type="HOGENOM" id="CLU_022752_2_0_2"/>
<dbReference type="InParanoid" id="Q58816"/>
<dbReference type="PhylomeDB" id="Q58816"/>
<dbReference type="UniPathway" id="UPA00148">
    <property type="reaction ID" value="UER00231"/>
</dbReference>
<dbReference type="Proteomes" id="UP000000805">
    <property type="component" value="Chromosome"/>
</dbReference>
<dbReference type="GO" id="GO:0005524">
    <property type="term" value="F:ATP binding"/>
    <property type="evidence" value="ECO:0007669"/>
    <property type="project" value="UniProtKB-UniRule"/>
</dbReference>
<dbReference type="GO" id="GO:0042242">
    <property type="term" value="F:cobyrinic acid a,c-diamide synthase activity"/>
    <property type="evidence" value="ECO:0007669"/>
    <property type="project" value="UniProtKB-UniRule"/>
</dbReference>
<dbReference type="GO" id="GO:0009236">
    <property type="term" value="P:cobalamin biosynthetic process"/>
    <property type="evidence" value="ECO:0007669"/>
    <property type="project" value="UniProtKB-UniRule"/>
</dbReference>
<dbReference type="GO" id="GO:0015948">
    <property type="term" value="P:methanogenesis"/>
    <property type="evidence" value="ECO:0007669"/>
    <property type="project" value="UniProtKB-KW"/>
</dbReference>
<dbReference type="CDD" id="cd05388">
    <property type="entry name" value="CobB_N"/>
    <property type="match status" value="1"/>
</dbReference>
<dbReference type="CDD" id="cd03130">
    <property type="entry name" value="GATase1_CobB"/>
    <property type="match status" value="1"/>
</dbReference>
<dbReference type="Gene3D" id="3.40.50.300">
    <property type="entry name" value="P-loop containing nucleotide triphosphate hydrolases"/>
    <property type="match status" value="2"/>
</dbReference>
<dbReference type="HAMAP" id="MF_00027">
    <property type="entry name" value="CobB_CbiA"/>
    <property type="match status" value="1"/>
</dbReference>
<dbReference type="InterPro" id="IPR004484">
    <property type="entry name" value="CbiA/CobB_synth"/>
</dbReference>
<dbReference type="InterPro" id="IPR029062">
    <property type="entry name" value="Class_I_gatase-like"/>
</dbReference>
<dbReference type="InterPro" id="IPR002586">
    <property type="entry name" value="CobQ/CobB/MinD/ParA_Nub-bd_dom"/>
</dbReference>
<dbReference type="InterPro" id="IPR011698">
    <property type="entry name" value="GATase_3"/>
</dbReference>
<dbReference type="InterPro" id="IPR027417">
    <property type="entry name" value="P-loop_NTPase"/>
</dbReference>
<dbReference type="NCBIfam" id="TIGR00379">
    <property type="entry name" value="cobB"/>
    <property type="match status" value="1"/>
</dbReference>
<dbReference type="NCBIfam" id="NF033195">
    <property type="entry name" value="F430_CfbB"/>
    <property type="match status" value="1"/>
</dbReference>
<dbReference type="NCBIfam" id="NF002204">
    <property type="entry name" value="PRK01077.1"/>
    <property type="match status" value="1"/>
</dbReference>
<dbReference type="PANTHER" id="PTHR43873">
    <property type="entry name" value="COBYRINATE A,C-DIAMIDE SYNTHASE"/>
    <property type="match status" value="1"/>
</dbReference>
<dbReference type="PANTHER" id="PTHR43873:SF1">
    <property type="entry name" value="COBYRINATE A,C-DIAMIDE SYNTHASE"/>
    <property type="match status" value="1"/>
</dbReference>
<dbReference type="Pfam" id="PF01656">
    <property type="entry name" value="CbiA"/>
    <property type="match status" value="1"/>
</dbReference>
<dbReference type="Pfam" id="PF07685">
    <property type="entry name" value="GATase_3"/>
    <property type="match status" value="1"/>
</dbReference>
<dbReference type="SUPFAM" id="SSF52317">
    <property type="entry name" value="Class I glutamine amidotransferase-like"/>
    <property type="match status" value="1"/>
</dbReference>
<dbReference type="SUPFAM" id="SSF52540">
    <property type="entry name" value="P-loop containing nucleoside triphosphate hydrolases"/>
    <property type="match status" value="1"/>
</dbReference>
<dbReference type="PROSITE" id="PS51274">
    <property type="entry name" value="GATASE_COBBQ"/>
    <property type="match status" value="1"/>
</dbReference>